<protein>
    <recommendedName>
        <fullName evidence="1">Methylglyoxal synthase</fullName>
        <shortName evidence="1">MGS</shortName>
        <ecNumber evidence="1">4.2.3.3</ecNumber>
    </recommendedName>
</protein>
<proteinExistence type="inferred from homology"/>
<gene>
    <name evidence="1" type="primary">mgsA</name>
    <name type="ordered locus">BRA1048</name>
    <name type="ordered locus">BS1330_II1040</name>
</gene>
<sequence length="125" mass="13546">MTQRLRIALIAHDQKKDDMVAFARAHEQALSRYDIVATGTTGGLIQDACPSLNIHRVKSGPLGGDQQIGAMIAEGTVEVLIFFIDPLSPLPHDVDVKALTRLGSVYDIPMALNRATAEKLVRALD</sequence>
<dbReference type="EC" id="4.2.3.3" evidence="1"/>
<dbReference type="EMBL" id="AE014292">
    <property type="protein sequence ID" value="AAN34215.1"/>
    <property type="molecule type" value="Genomic_DNA"/>
</dbReference>
<dbReference type="EMBL" id="CP002998">
    <property type="protein sequence ID" value="AEM20492.1"/>
    <property type="molecule type" value="Genomic_DNA"/>
</dbReference>
<dbReference type="RefSeq" id="WP_002965604.1">
    <property type="nucleotide sequence ID" value="NZ_KN046805.1"/>
</dbReference>
<dbReference type="SMR" id="P0A3Q3"/>
<dbReference type="KEGG" id="bms:BRA1048"/>
<dbReference type="KEGG" id="bsi:BS1330_II1040"/>
<dbReference type="PATRIC" id="fig|204722.21.peg.1072"/>
<dbReference type="HOGENOM" id="CLU_120420_1_0_5"/>
<dbReference type="PhylomeDB" id="P0A3Q3"/>
<dbReference type="Proteomes" id="UP000007104">
    <property type="component" value="Chromosome II"/>
</dbReference>
<dbReference type="GO" id="GO:0005829">
    <property type="term" value="C:cytosol"/>
    <property type="evidence" value="ECO:0007669"/>
    <property type="project" value="TreeGrafter"/>
</dbReference>
<dbReference type="GO" id="GO:0008929">
    <property type="term" value="F:methylglyoxal synthase activity"/>
    <property type="evidence" value="ECO:0007669"/>
    <property type="project" value="UniProtKB-UniRule"/>
</dbReference>
<dbReference type="GO" id="GO:0019242">
    <property type="term" value="P:methylglyoxal biosynthetic process"/>
    <property type="evidence" value="ECO:0007669"/>
    <property type="project" value="UniProtKB-UniRule"/>
</dbReference>
<dbReference type="CDD" id="cd01422">
    <property type="entry name" value="MGS"/>
    <property type="match status" value="1"/>
</dbReference>
<dbReference type="Gene3D" id="3.40.50.1380">
    <property type="entry name" value="Methylglyoxal synthase-like domain"/>
    <property type="match status" value="1"/>
</dbReference>
<dbReference type="HAMAP" id="MF_00549">
    <property type="entry name" value="Methylglyoxal_synth"/>
    <property type="match status" value="1"/>
</dbReference>
<dbReference type="InterPro" id="IPR004363">
    <property type="entry name" value="Methylgl_synth"/>
</dbReference>
<dbReference type="InterPro" id="IPR018148">
    <property type="entry name" value="Methylglyoxal_synth_AS"/>
</dbReference>
<dbReference type="InterPro" id="IPR011607">
    <property type="entry name" value="MGS-like_dom"/>
</dbReference>
<dbReference type="InterPro" id="IPR036914">
    <property type="entry name" value="MGS-like_dom_sf"/>
</dbReference>
<dbReference type="NCBIfam" id="TIGR00160">
    <property type="entry name" value="MGSA"/>
    <property type="match status" value="1"/>
</dbReference>
<dbReference type="NCBIfam" id="NF003559">
    <property type="entry name" value="PRK05234.1"/>
    <property type="match status" value="1"/>
</dbReference>
<dbReference type="PANTHER" id="PTHR30492">
    <property type="entry name" value="METHYLGLYOXAL SYNTHASE"/>
    <property type="match status" value="1"/>
</dbReference>
<dbReference type="PANTHER" id="PTHR30492:SF0">
    <property type="entry name" value="METHYLGLYOXAL SYNTHASE"/>
    <property type="match status" value="1"/>
</dbReference>
<dbReference type="Pfam" id="PF02142">
    <property type="entry name" value="MGS"/>
    <property type="match status" value="1"/>
</dbReference>
<dbReference type="PIRSF" id="PIRSF006614">
    <property type="entry name" value="Methylglyox_syn"/>
    <property type="match status" value="1"/>
</dbReference>
<dbReference type="SMART" id="SM00851">
    <property type="entry name" value="MGS"/>
    <property type="match status" value="1"/>
</dbReference>
<dbReference type="SUPFAM" id="SSF52335">
    <property type="entry name" value="Methylglyoxal synthase-like"/>
    <property type="match status" value="1"/>
</dbReference>
<dbReference type="PROSITE" id="PS01335">
    <property type="entry name" value="METHYLGLYOXAL_SYNTH"/>
    <property type="match status" value="1"/>
</dbReference>
<dbReference type="PROSITE" id="PS51855">
    <property type="entry name" value="MGS"/>
    <property type="match status" value="1"/>
</dbReference>
<organism>
    <name type="scientific">Brucella suis biovar 1 (strain 1330)</name>
    <dbReference type="NCBI Taxonomy" id="204722"/>
    <lineage>
        <taxon>Bacteria</taxon>
        <taxon>Pseudomonadati</taxon>
        <taxon>Pseudomonadota</taxon>
        <taxon>Alphaproteobacteria</taxon>
        <taxon>Hyphomicrobiales</taxon>
        <taxon>Brucellaceae</taxon>
        <taxon>Brucella/Ochrobactrum group</taxon>
        <taxon>Brucella</taxon>
    </lineage>
</organism>
<comment type="function">
    <text evidence="1">Catalyzes the formation of methylglyoxal from dihydroxyacetone phosphate.</text>
</comment>
<comment type="catalytic activity">
    <reaction evidence="1">
        <text>dihydroxyacetone phosphate = methylglyoxal + phosphate</text>
        <dbReference type="Rhea" id="RHEA:17937"/>
        <dbReference type="ChEBI" id="CHEBI:17158"/>
        <dbReference type="ChEBI" id="CHEBI:43474"/>
        <dbReference type="ChEBI" id="CHEBI:57642"/>
        <dbReference type="EC" id="4.2.3.3"/>
    </reaction>
</comment>
<comment type="similarity">
    <text evidence="1 2">Belongs to the methylglyoxal synthase family.</text>
</comment>
<evidence type="ECO:0000255" key="1">
    <source>
        <dbReference type="HAMAP-Rule" id="MF_00549"/>
    </source>
</evidence>
<evidence type="ECO:0000305" key="2"/>
<feature type="chain" id="PRO_0000178618" description="Methylglyoxal synthase">
    <location>
        <begin position="1"/>
        <end position="125"/>
    </location>
</feature>
<feature type="domain" description="MGS-like" evidence="1">
    <location>
        <begin position="1"/>
        <end position="125"/>
    </location>
</feature>
<feature type="active site" description="Proton donor/acceptor" evidence="1">
    <location>
        <position position="65"/>
    </location>
</feature>
<feature type="binding site" evidence="1">
    <location>
        <position position="12"/>
    </location>
    <ligand>
        <name>substrate</name>
    </ligand>
</feature>
<feature type="binding site" evidence="1">
    <location>
        <position position="16"/>
    </location>
    <ligand>
        <name>substrate</name>
    </ligand>
</feature>
<feature type="binding site" evidence="1">
    <location>
        <begin position="38"/>
        <end position="41"/>
    </location>
    <ligand>
        <name>substrate</name>
    </ligand>
</feature>
<feature type="binding site" evidence="1">
    <location>
        <begin position="59"/>
        <end position="60"/>
    </location>
    <ligand>
        <name>substrate</name>
    </ligand>
</feature>
<feature type="binding site" evidence="1">
    <location>
        <position position="92"/>
    </location>
    <ligand>
        <name>substrate</name>
    </ligand>
</feature>
<name>MGSA_BRUSU</name>
<keyword id="KW-0456">Lyase</keyword>
<accession>P0A3Q3</accession>
<accession>G0KE54</accession>
<accession>Q44615</accession>
<reference key="1">
    <citation type="journal article" date="2002" name="Proc. Natl. Acad. Sci. U.S.A.">
        <title>The Brucella suis genome reveals fundamental similarities between animal and plant pathogens and symbionts.</title>
        <authorList>
            <person name="Paulsen I.T."/>
            <person name="Seshadri R."/>
            <person name="Nelson K.E."/>
            <person name="Eisen J.A."/>
            <person name="Heidelberg J.F."/>
            <person name="Read T.D."/>
            <person name="Dodson R.J."/>
            <person name="Umayam L.A."/>
            <person name="Brinkac L.M."/>
            <person name="Beanan M.J."/>
            <person name="Daugherty S.C."/>
            <person name="DeBoy R.T."/>
            <person name="Durkin A.S."/>
            <person name="Kolonay J.F."/>
            <person name="Madupu R."/>
            <person name="Nelson W.C."/>
            <person name="Ayodeji B."/>
            <person name="Kraul M."/>
            <person name="Shetty J."/>
            <person name="Malek J.A."/>
            <person name="Van Aken S.E."/>
            <person name="Riedmuller S."/>
            <person name="Tettelin H."/>
            <person name="Gill S.R."/>
            <person name="White O."/>
            <person name="Salzberg S.L."/>
            <person name="Hoover D.L."/>
            <person name="Lindler L.E."/>
            <person name="Halling S.M."/>
            <person name="Boyle S.M."/>
            <person name="Fraser C.M."/>
        </authorList>
    </citation>
    <scope>NUCLEOTIDE SEQUENCE [LARGE SCALE GENOMIC DNA]</scope>
    <source>
        <strain>1330</strain>
    </source>
</reference>
<reference key="2">
    <citation type="journal article" date="2011" name="J. Bacteriol.">
        <title>Revised genome sequence of Brucella suis 1330.</title>
        <authorList>
            <person name="Tae H."/>
            <person name="Shallom S."/>
            <person name="Settlage R."/>
            <person name="Preston D."/>
            <person name="Adams L.G."/>
            <person name="Garner H.R."/>
        </authorList>
    </citation>
    <scope>NUCLEOTIDE SEQUENCE [LARGE SCALE GENOMIC DNA]</scope>
    <source>
        <strain>1330</strain>
    </source>
</reference>